<evidence type="ECO:0000255" key="1">
    <source>
        <dbReference type="HAMAP-Rule" id="MF_00186"/>
    </source>
</evidence>
<sequence length="508" mass="57048">MDKKKYIITLDEGTTSCRSIVFDKQAKIVSVAQNEFTQYFPQSGWVEHDPLEIWNTQLSTMQSVKNKAQIKSVNVEAVGITNQRETVVLWNKETGLPVYNAIVWQDRRTSEYCETLTKHVDKVREKTGLIINPYFSGTKIRWILKNVPLAQKTLKAGKLLAGTIDSWLIWKLTGGKVHATDVSNASRTLLFNIHTMDWDQELLDLFEIPRSILPEVKSSSEVYGYVEPSLWSQRATAKVPITGVAGDQQSALFGQLCLKPGMVKNTYGTGCFTLMNIGEKPIMSKNKLLTTVAWKLGKKKPVYALEGSVFIAGAAVQWIRDGLRLIYDAAESDFYANLASKQDTHQVYLVPSFTGLGAPYWDSYSRGAIFGLERGTKKEHIIKATLESIVFQTNDLIKAMSSDVGKKIEVVKVDGGATRSEYIMQFQSSISGVNVIRPKNIESTALGATFLAGLAVGYWKDLKELEKLVKVDKEFKPKLDKEKVEKLVHGWNVAVKRTFNWMKEVDLK</sequence>
<name>GLPK_MYCGA</name>
<accession>Q7NC65</accession>
<proteinExistence type="inferred from homology"/>
<reference key="1">
    <citation type="journal article" date="2003" name="Microbiology">
        <title>The complete genome sequence of the avian pathogen Mycoplasma gallisepticum strain R(low).</title>
        <authorList>
            <person name="Papazisi L."/>
            <person name="Gorton T.S."/>
            <person name="Kutish G."/>
            <person name="Markham P.F."/>
            <person name="Browning G.F."/>
            <person name="Nguyen D.K."/>
            <person name="Swartzell S."/>
            <person name="Madan A."/>
            <person name="Mahairas G."/>
            <person name="Geary S.J."/>
        </authorList>
    </citation>
    <scope>NUCLEOTIDE SEQUENCE [LARGE SCALE GENOMIC DNA]</scope>
    <source>
        <strain>R(low / passage 15 / clone 2)</strain>
    </source>
</reference>
<keyword id="KW-0067">ATP-binding</keyword>
<keyword id="KW-0319">Glycerol metabolism</keyword>
<keyword id="KW-0418">Kinase</keyword>
<keyword id="KW-0547">Nucleotide-binding</keyword>
<keyword id="KW-1185">Reference proteome</keyword>
<keyword id="KW-0808">Transferase</keyword>
<feature type="chain" id="PRO_0000059466" description="Glycerol kinase">
    <location>
        <begin position="1"/>
        <end position="508"/>
    </location>
</feature>
<feature type="binding site" evidence="1">
    <location>
        <position position="14"/>
    </location>
    <ligand>
        <name>ADP</name>
        <dbReference type="ChEBI" id="CHEBI:456216"/>
    </ligand>
</feature>
<feature type="binding site" evidence="1">
    <location>
        <position position="14"/>
    </location>
    <ligand>
        <name>ATP</name>
        <dbReference type="ChEBI" id="CHEBI:30616"/>
    </ligand>
</feature>
<feature type="binding site" evidence="1">
    <location>
        <position position="14"/>
    </location>
    <ligand>
        <name>sn-glycerol 3-phosphate</name>
        <dbReference type="ChEBI" id="CHEBI:57597"/>
    </ligand>
</feature>
<feature type="binding site" evidence="1">
    <location>
        <position position="15"/>
    </location>
    <ligand>
        <name>ATP</name>
        <dbReference type="ChEBI" id="CHEBI:30616"/>
    </ligand>
</feature>
<feature type="binding site" evidence="1">
    <location>
        <position position="16"/>
    </location>
    <ligand>
        <name>ATP</name>
        <dbReference type="ChEBI" id="CHEBI:30616"/>
    </ligand>
</feature>
<feature type="binding site" evidence="1">
    <location>
        <position position="18"/>
    </location>
    <ligand>
        <name>ADP</name>
        <dbReference type="ChEBI" id="CHEBI:456216"/>
    </ligand>
</feature>
<feature type="binding site" evidence="1">
    <location>
        <position position="84"/>
    </location>
    <ligand>
        <name>glycerol</name>
        <dbReference type="ChEBI" id="CHEBI:17754"/>
    </ligand>
</feature>
<feature type="binding site" evidence="1">
    <location>
        <position position="84"/>
    </location>
    <ligand>
        <name>sn-glycerol 3-phosphate</name>
        <dbReference type="ChEBI" id="CHEBI:57597"/>
    </ligand>
</feature>
<feature type="binding site" evidence="1">
    <location>
        <position position="85"/>
    </location>
    <ligand>
        <name>glycerol</name>
        <dbReference type="ChEBI" id="CHEBI:17754"/>
    </ligand>
</feature>
<feature type="binding site" evidence="1">
    <location>
        <position position="85"/>
    </location>
    <ligand>
        <name>sn-glycerol 3-phosphate</name>
        <dbReference type="ChEBI" id="CHEBI:57597"/>
    </ligand>
</feature>
<feature type="binding site" evidence="1">
    <location>
        <position position="134"/>
    </location>
    <ligand>
        <name>glycerol</name>
        <dbReference type="ChEBI" id="CHEBI:17754"/>
    </ligand>
</feature>
<feature type="binding site" evidence="1">
    <location>
        <position position="134"/>
    </location>
    <ligand>
        <name>sn-glycerol 3-phosphate</name>
        <dbReference type="ChEBI" id="CHEBI:57597"/>
    </ligand>
</feature>
<feature type="binding site" evidence="1">
    <location>
        <position position="247"/>
    </location>
    <ligand>
        <name>glycerol</name>
        <dbReference type="ChEBI" id="CHEBI:17754"/>
    </ligand>
</feature>
<feature type="binding site" evidence="1">
    <location>
        <position position="247"/>
    </location>
    <ligand>
        <name>sn-glycerol 3-phosphate</name>
        <dbReference type="ChEBI" id="CHEBI:57597"/>
    </ligand>
</feature>
<feature type="binding site" evidence="1">
    <location>
        <position position="248"/>
    </location>
    <ligand>
        <name>glycerol</name>
        <dbReference type="ChEBI" id="CHEBI:17754"/>
    </ligand>
</feature>
<feature type="binding site" evidence="1">
    <location>
        <position position="269"/>
    </location>
    <ligand>
        <name>ADP</name>
        <dbReference type="ChEBI" id="CHEBI:456216"/>
    </ligand>
</feature>
<feature type="binding site" evidence="1">
    <location>
        <position position="269"/>
    </location>
    <ligand>
        <name>ATP</name>
        <dbReference type="ChEBI" id="CHEBI:30616"/>
    </ligand>
</feature>
<feature type="binding site" evidence="1">
    <location>
        <position position="313"/>
    </location>
    <ligand>
        <name>ADP</name>
        <dbReference type="ChEBI" id="CHEBI:456216"/>
    </ligand>
</feature>
<feature type="binding site" evidence="1">
    <location>
        <position position="313"/>
    </location>
    <ligand>
        <name>ATP</name>
        <dbReference type="ChEBI" id="CHEBI:30616"/>
    </ligand>
</feature>
<feature type="binding site" evidence="1">
    <location>
        <position position="317"/>
    </location>
    <ligand>
        <name>ATP</name>
        <dbReference type="ChEBI" id="CHEBI:30616"/>
    </ligand>
</feature>
<feature type="binding site" evidence="1">
    <location>
        <position position="416"/>
    </location>
    <ligand>
        <name>ADP</name>
        <dbReference type="ChEBI" id="CHEBI:456216"/>
    </ligand>
</feature>
<feature type="binding site" evidence="1">
    <location>
        <position position="416"/>
    </location>
    <ligand>
        <name>ATP</name>
        <dbReference type="ChEBI" id="CHEBI:30616"/>
    </ligand>
</feature>
<organism>
    <name type="scientific">Mycoplasmoides gallisepticum (strain R(low / passage 15 / clone 2))</name>
    <name type="common">Mycoplasma gallisepticum</name>
    <dbReference type="NCBI Taxonomy" id="710127"/>
    <lineage>
        <taxon>Bacteria</taxon>
        <taxon>Bacillati</taxon>
        <taxon>Mycoplasmatota</taxon>
        <taxon>Mycoplasmoidales</taxon>
        <taxon>Mycoplasmoidaceae</taxon>
        <taxon>Mycoplasmoides</taxon>
    </lineage>
</organism>
<comment type="function">
    <text evidence="1">Key enzyme in the regulation of glycerol uptake and metabolism. Catalyzes the phosphorylation of glycerol to yield sn-glycerol 3-phosphate.</text>
</comment>
<comment type="catalytic activity">
    <reaction evidence="1">
        <text>glycerol + ATP = sn-glycerol 3-phosphate + ADP + H(+)</text>
        <dbReference type="Rhea" id="RHEA:21644"/>
        <dbReference type="ChEBI" id="CHEBI:15378"/>
        <dbReference type="ChEBI" id="CHEBI:17754"/>
        <dbReference type="ChEBI" id="CHEBI:30616"/>
        <dbReference type="ChEBI" id="CHEBI:57597"/>
        <dbReference type="ChEBI" id="CHEBI:456216"/>
        <dbReference type="EC" id="2.7.1.30"/>
    </reaction>
</comment>
<comment type="activity regulation">
    <text evidence="1">Inhibited by fructose 1,6-bisphosphate (FBP).</text>
</comment>
<comment type="pathway">
    <text evidence="1">Polyol metabolism; glycerol degradation via glycerol kinase pathway; sn-glycerol 3-phosphate from glycerol: step 1/1.</text>
</comment>
<comment type="similarity">
    <text evidence="1">Belongs to the FGGY kinase family.</text>
</comment>
<protein>
    <recommendedName>
        <fullName evidence="1">Glycerol kinase</fullName>
        <ecNumber evidence="1">2.7.1.30</ecNumber>
    </recommendedName>
    <alternativeName>
        <fullName evidence="1">ATP:glycerol 3-phosphotransferase</fullName>
    </alternativeName>
    <alternativeName>
        <fullName evidence="1">Glycerokinase</fullName>
        <shortName evidence="1">GK</shortName>
    </alternativeName>
</protein>
<dbReference type="EC" id="2.7.1.30" evidence="1"/>
<dbReference type="EMBL" id="AE015450">
    <property type="protein sequence ID" value="AAP56365.2"/>
    <property type="molecule type" value="Genomic_DNA"/>
</dbReference>
<dbReference type="RefSeq" id="WP_011113244.1">
    <property type="nucleotide sequence ID" value="NC_004829.2"/>
</dbReference>
<dbReference type="SMR" id="Q7NC65"/>
<dbReference type="KEGG" id="mga:MGA_0644"/>
<dbReference type="PATRIC" id="fig|233150.7.peg.17"/>
<dbReference type="HOGENOM" id="CLU_009281_2_3_14"/>
<dbReference type="OrthoDB" id="9805576at2"/>
<dbReference type="UniPathway" id="UPA00618">
    <property type="reaction ID" value="UER00672"/>
</dbReference>
<dbReference type="Proteomes" id="UP000001418">
    <property type="component" value="Chromosome"/>
</dbReference>
<dbReference type="GO" id="GO:0005829">
    <property type="term" value="C:cytosol"/>
    <property type="evidence" value="ECO:0007669"/>
    <property type="project" value="TreeGrafter"/>
</dbReference>
<dbReference type="GO" id="GO:0005524">
    <property type="term" value="F:ATP binding"/>
    <property type="evidence" value="ECO:0007669"/>
    <property type="project" value="UniProtKB-UniRule"/>
</dbReference>
<dbReference type="GO" id="GO:0004370">
    <property type="term" value="F:glycerol kinase activity"/>
    <property type="evidence" value="ECO:0000250"/>
    <property type="project" value="UniProtKB"/>
</dbReference>
<dbReference type="GO" id="GO:0019563">
    <property type="term" value="P:glycerol catabolic process"/>
    <property type="evidence" value="ECO:0007669"/>
    <property type="project" value="UniProtKB-UniRule"/>
</dbReference>
<dbReference type="GO" id="GO:0006071">
    <property type="term" value="P:glycerol metabolic process"/>
    <property type="evidence" value="ECO:0000250"/>
    <property type="project" value="UniProtKB"/>
</dbReference>
<dbReference type="GO" id="GO:0006072">
    <property type="term" value="P:glycerol-3-phosphate metabolic process"/>
    <property type="evidence" value="ECO:0007669"/>
    <property type="project" value="InterPro"/>
</dbReference>
<dbReference type="CDD" id="cd07786">
    <property type="entry name" value="FGGY_EcGK_like"/>
    <property type="match status" value="1"/>
</dbReference>
<dbReference type="FunFam" id="3.30.420.40:FF:000007">
    <property type="entry name" value="Glycerol kinase"/>
    <property type="match status" value="1"/>
</dbReference>
<dbReference type="FunFam" id="3.30.420.40:FF:000008">
    <property type="entry name" value="Glycerol kinase"/>
    <property type="match status" value="1"/>
</dbReference>
<dbReference type="Gene3D" id="3.30.420.40">
    <property type="match status" value="2"/>
</dbReference>
<dbReference type="HAMAP" id="MF_00186">
    <property type="entry name" value="Glycerol_kin"/>
    <property type="match status" value="1"/>
</dbReference>
<dbReference type="InterPro" id="IPR043129">
    <property type="entry name" value="ATPase_NBD"/>
</dbReference>
<dbReference type="InterPro" id="IPR000577">
    <property type="entry name" value="Carb_kinase_FGGY"/>
</dbReference>
<dbReference type="InterPro" id="IPR018483">
    <property type="entry name" value="Carb_kinase_FGGY_CS"/>
</dbReference>
<dbReference type="InterPro" id="IPR018485">
    <property type="entry name" value="FGGY_C"/>
</dbReference>
<dbReference type="InterPro" id="IPR018484">
    <property type="entry name" value="FGGY_N"/>
</dbReference>
<dbReference type="InterPro" id="IPR005999">
    <property type="entry name" value="Glycerol_kin"/>
</dbReference>
<dbReference type="NCBIfam" id="TIGR01311">
    <property type="entry name" value="glycerol_kin"/>
    <property type="match status" value="1"/>
</dbReference>
<dbReference type="NCBIfam" id="NF000756">
    <property type="entry name" value="PRK00047.1"/>
    <property type="match status" value="1"/>
</dbReference>
<dbReference type="PANTHER" id="PTHR10196:SF69">
    <property type="entry name" value="GLYCEROL KINASE"/>
    <property type="match status" value="1"/>
</dbReference>
<dbReference type="PANTHER" id="PTHR10196">
    <property type="entry name" value="SUGAR KINASE"/>
    <property type="match status" value="1"/>
</dbReference>
<dbReference type="Pfam" id="PF02782">
    <property type="entry name" value="FGGY_C"/>
    <property type="match status" value="1"/>
</dbReference>
<dbReference type="Pfam" id="PF00370">
    <property type="entry name" value="FGGY_N"/>
    <property type="match status" value="1"/>
</dbReference>
<dbReference type="PIRSF" id="PIRSF000538">
    <property type="entry name" value="GlpK"/>
    <property type="match status" value="1"/>
</dbReference>
<dbReference type="SUPFAM" id="SSF53067">
    <property type="entry name" value="Actin-like ATPase domain"/>
    <property type="match status" value="2"/>
</dbReference>
<dbReference type="PROSITE" id="PS00933">
    <property type="entry name" value="FGGY_KINASES_1"/>
    <property type="match status" value="1"/>
</dbReference>
<dbReference type="PROSITE" id="PS00445">
    <property type="entry name" value="FGGY_KINASES_2"/>
    <property type="match status" value="1"/>
</dbReference>
<gene>
    <name evidence="1" type="primary">glpK</name>
    <name type="ordered locus">MYCGA0150</name>
    <name type="ORF">MGA_0644</name>
</gene>